<evidence type="ECO:0000255" key="1"/>
<evidence type="ECO:0000305" key="2"/>
<sequence length="103" mass="11702">MMSEKFALVLLVACIAFIGIETSPINSDSWKDGFCGENEAYDSMRRGCEKRCDDHNPTFCFKFTTVCWCEKGYVRDKSDTCIKVEDCPNVSENLEFSETIIGM</sequence>
<dbReference type="EMBL" id="DQ000240">
    <property type="protein sequence ID" value="AAY24526.1"/>
    <property type="molecule type" value="Genomic_DNA"/>
</dbReference>
<dbReference type="KEGG" id="vg:3416069"/>
<dbReference type="Proteomes" id="UP000008168">
    <property type="component" value="Genome"/>
</dbReference>
<dbReference type="CDD" id="cd19941">
    <property type="entry name" value="TIL"/>
    <property type="match status" value="1"/>
</dbReference>
<dbReference type="Gene3D" id="2.10.25.10">
    <property type="entry name" value="Laminin"/>
    <property type="match status" value="1"/>
</dbReference>
<dbReference type="InterPro" id="IPR036084">
    <property type="entry name" value="Ser_inhib-like_sf"/>
</dbReference>
<dbReference type="InterPro" id="IPR002919">
    <property type="entry name" value="TIL_dom"/>
</dbReference>
<dbReference type="Pfam" id="PF01826">
    <property type="entry name" value="TIL"/>
    <property type="match status" value="1"/>
</dbReference>
<dbReference type="SUPFAM" id="SSF57567">
    <property type="entry name" value="Serine protease inhibitors"/>
    <property type="match status" value="1"/>
</dbReference>
<keyword id="KW-1185">Reference proteome</keyword>
<keyword id="KW-0732">Signal</keyword>
<organismHost>
    <name type="scientific">Microplitis demolitor</name>
    <name type="common">Parasitoid wasp</name>
    <dbReference type="NCBI Taxonomy" id="69319"/>
</organismHost>
<organism>
    <name type="scientific">Microplitis demolitor bracovirus (isolate Webb)</name>
    <name type="common">MdBV</name>
    <dbReference type="NCBI Taxonomy" id="654919"/>
    <lineage>
        <taxon>Viruses</taxon>
        <taxon>Viruses incertae sedis</taxon>
        <taxon>Polydnaviriformidae</taxon>
        <taxon>Bracoviriform</taxon>
        <taxon>Microplitis demolitor bracovirus</taxon>
    </lineage>
</organism>
<comment type="similarity">
    <text evidence="2">Belongs to the polydnaviridae EGF-like motif protein family.</text>
</comment>
<reference key="1">
    <citation type="journal article" date="2006" name="Virology">
        <title>Polydnavirus genomes reflect their dual roles as mutualists and pathogens.</title>
        <authorList>
            <person name="Webb B.A."/>
            <person name="Strand M.R."/>
            <person name="Dickey S.E."/>
            <person name="Beck M.H."/>
            <person name="Hilgarth R.S."/>
            <person name="Barney W.E."/>
            <person name="Kadash K."/>
            <person name="Kroemer J.A."/>
            <person name="Lindstrom K.G."/>
            <person name="Rattanadechakul W."/>
            <person name="Shelby K.S."/>
            <person name="Thoetkiattikul H."/>
            <person name="Turnbull M.W."/>
            <person name="Witherell R.A."/>
        </authorList>
    </citation>
    <scope>NUCLEOTIDE SEQUENCE [GENOMIC DNA]</scope>
</reference>
<name>EG04A_MDBVW</name>
<feature type="signal peptide" evidence="1">
    <location>
        <begin position="1"/>
        <end position="22"/>
    </location>
</feature>
<feature type="chain" id="PRO_0000405374" description="Probable protease inhibitor Egf0.4a">
    <location>
        <begin position="23"/>
        <end position="103"/>
    </location>
</feature>
<feature type="domain" description="TIL">
    <location>
        <begin position="35"/>
        <end position="87"/>
    </location>
</feature>
<gene>
    <name type="primary">O4</name>
</gene>
<accession>Q4ZJZ2</accession>
<proteinExistence type="inferred from homology"/>
<protein>
    <recommendedName>
        <fullName>Probable protease inhibitor Egf0.4a</fullName>
    </recommendedName>
</protein>